<reference key="1">
    <citation type="journal article" date="2002" name="Environ. Microbiol.">
        <title>Complete genome sequence and comparative analysis of the metabolically versatile Pseudomonas putida KT2440.</title>
        <authorList>
            <person name="Nelson K.E."/>
            <person name="Weinel C."/>
            <person name="Paulsen I.T."/>
            <person name="Dodson R.J."/>
            <person name="Hilbert H."/>
            <person name="Martins dos Santos V.A.P."/>
            <person name="Fouts D.E."/>
            <person name="Gill S.R."/>
            <person name="Pop M."/>
            <person name="Holmes M."/>
            <person name="Brinkac L.M."/>
            <person name="Beanan M.J."/>
            <person name="DeBoy R.T."/>
            <person name="Daugherty S.C."/>
            <person name="Kolonay J.F."/>
            <person name="Madupu R."/>
            <person name="Nelson W.C."/>
            <person name="White O."/>
            <person name="Peterson J.D."/>
            <person name="Khouri H.M."/>
            <person name="Hance I."/>
            <person name="Chris Lee P."/>
            <person name="Holtzapple E.K."/>
            <person name="Scanlan D."/>
            <person name="Tran K."/>
            <person name="Moazzez A."/>
            <person name="Utterback T.R."/>
            <person name="Rizzo M."/>
            <person name="Lee K."/>
            <person name="Kosack D."/>
            <person name="Moestl D."/>
            <person name="Wedler H."/>
            <person name="Lauber J."/>
            <person name="Stjepandic D."/>
            <person name="Hoheisel J."/>
            <person name="Straetz M."/>
            <person name="Heim S."/>
            <person name="Kiewitz C."/>
            <person name="Eisen J.A."/>
            <person name="Timmis K.N."/>
            <person name="Duesterhoeft A."/>
            <person name="Tuemmler B."/>
            <person name="Fraser C.M."/>
        </authorList>
    </citation>
    <scope>NUCLEOTIDE SEQUENCE [LARGE SCALE GENOMIC DNA]</scope>
    <source>
        <strain>ATCC 47054 / DSM 6125 / CFBP 8728 / NCIMB 11950 / KT2440</strain>
    </source>
</reference>
<accession>Q88PA9</accession>
<proteinExistence type="inferred from homology"/>
<comment type="function">
    <text evidence="1">Member of a network of 50S ribosomal subunit biogenesis factors which assembles along the 30S-50S interface, preventing incorrect 23S rRNA structures from forming. Promotes peptidyl transferase center (PTC) maturation.</text>
</comment>
<comment type="subcellular location">
    <subcellularLocation>
        <location evidence="1">Cytoplasm</location>
    </subcellularLocation>
    <text evidence="1">Associates with late stage pre-50S ribosomal subunits.</text>
</comment>
<comment type="similarity">
    <text evidence="1">Belongs to the DarP family.</text>
</comment>
<dbReference type="EMBL" id="AE015451">
    <property type="protein sequence ID" value="AAN66566.1"/>
    <property type="molecule type" value="Genomic_DNA"/>
</dbReference>
<dbReference type="RefSeq" id="NP_743102.1">
    <property type="nucleotide sequence ID" value="NC_002947.4"/>
</dbReference>
<dbReference type="SMR" id="Q88PA9"/>
<dbReference type="STRING" id="160488.PP_0941"/>
<dbReference type="PaxDb" id="160488-PP_0941"/>
<dbReference type="KEGG" id="ppu:PP_0941"/>
<dbReference type="PATRIC" id="fig|160488.4.peg.1002"/>
<dbReference type="eggNOG" id="COG3028">
    <property type="taxonomic scope" value="Bacteria"/>
</dbReference>
<dbReference type="HOGENOM" id="CLU_106757_4_0_6"/>
<dbReference type="OrthoDB" id="5293604at2"/>
<dbReference type="PhylomeDB" id="Q88PA9"/>
<dbReference type="BioCyc" id="PPUT160488:G1G01-1015-MONOMER"/>
<dbReference type="Proteomes" id="UP000000556">
    <property type="component" value="Chromosome"/>
</dbReference>
<dbReference type="GO" id="GO:0005829">
    <property type="term" value="C:cytosol"/>
    <property type="evidence" value="ECO:0007669"/>
    <property type="project" value="TreeGrafter"/>
</dbReference>
<dbReference type="GO" id="GO:0043022">
    <property type="term" value="F:ribosome binding"/>
    <property type="evidence" value="ECO:0007669"/>
    <property type="project" value="UniProtKB-UniRule"/>
</dbReference>
<dbReference type="GO" id="GO:0019843">
    <property type="term" value="F:rRNA binding"/>
    <property type="evidence" value="ECO:0007669"/>
    <property type="project" value="UniProtKB-UniRule"/>
</dbReference>
<dbReference type="GO" id="GO:1902626">
    <property type="term" value="P:assembly of large subunit precursor of preribosome"/>
    <property type="evidence" value="ECO:0007669"/>
    <property type="project" value="UniProtKB-UniRule"/>
</dbReference>
<dbReference type="CDD" id="cd16331">
    <property type="entry name" value="YjgA-like"/>
    <property type="match status" value="1"/>
</dbReference>
<dbReference type="FunFam" id="1.10.60.30:FF:000002">
    <property type="entry name" value="UPF0307 protein YjgA"/>
    <property type="match status" value="1"/>
</dbReference>
<dbReference type="Gene3D" id="1.10.60.30">
    <property type="entry name" value="PSPTO4464-like domains"/>
    <property type="match status" value="2"/>
</dbReference>
<dbReference type="HAMAP" id="MF_00765">
    <property type="entry name" value="DarP"/>
    <property type="match status" value="1"/>
</dbReference>
<dbReference type="InterPro" id="IPR006839">
    <property type="entry name" value="DarP"/>
</dbReference>
<dbReference type="InterPro" id="IPR023153">
    <property type="entry name" value="DarP_sf"/>
</dbReference>
<dbReference type="NCBIfam" id="NF003593">
    <property type="entry name" value="PRK05255.1-1"/>
    <property type="match status" value="1"/>
</dbReference>
<dbReference type="PANTHER" id="PTHR38101">
    <property type="entry name" value="UPF0307 PROTEIN YJGA"/>
    <property type="match status" value="1"/>
</dbReference>
<dbReference type="PANTHER" id="PTHR38101:SF1">
    <property type="entry name" value="UPF0307 PROTEIN YJGA"/>
    <property type="match status" value="1"/>
</dbReference>
<dbReference type="Pfam" id="PF04751">
    <property type="entry name" value="DarP"/>
    <property type="match status" value="1"/>
</dbReference>
<dbReference type="PIRSF" id="PIRSF016183">
    <property type="entry name" value="UCP016183"/>
    <property type="match status" value="1"/>
</dbReference>
<dbReference type="SUPFAM" id="SSF158710">
    <property type="entry name" value="PSPTO4464-like"/>
    <property type="match status" value="1"/>
</dbReference>
<protein>
    <recommendedName>
        <fullName evidence="1">Dual-action ribosomal maturation protein DarP</fullName>
    </recommendedName>
    <alternativeName>
        <fullName evidence="1">Large ribosomal subunit assembly factor DarP</fullName>
    </alternativeName>
</protein>
<organism>
    <name type="scientific">Pseudomonas putida (strain ATCC 47054 / DSM 6125 / CFBP 8728 / NCIMB 11950 / KT2440)</name>
    <dbReference type="NCBI Taxonomy" id="160488"/>
    <lineage>
        <taxon>Bacteria</taxon>
        <taxon>Pseudomonadati</taxon>
        <taxon>Pseudomonadota</taxon>
        <taxon>Gammaproteobacteria</taxon>
        <taxon>Pseudomonadales</taxon>
        <taxon>Pseudomonadaceae</taxon>
        <taxon>Pseudomonas</taxon>
    </lineage>
</organism>
<name>DARP_PSEPK</name>
<evidence type="ECO:0000255" key="1">
    <source>
        <dbReference type="HAMAP-Rule" id="MF_00765"/>
    </source>
</evidence>
<feature type="chain" id="PRO_0000208224" description="Dual-action ribosomal maturation protein DarP">
    <location>
        <begin position="1"/>
        <end position="173"/>
    </location>
</feature>
<gene>
    <name evidence="1" type="primary">darP</name>
    <name type="ordered locus">PP_0941</name>
</gene>
<sequence>MVDSNDDAFDGEKSKTQIKRELHALVELGERLTTLKADTLARLPLTDELRKALAEASKHTAHGARKRHMSFVGKLMRVQDLDAIHALLEQMDSSTRQYNERFHSLERWRDRLIDGNDEDLERFVNEYPDTDRQQLRSLVRHAQHEKARNKPPAAARKVFKYIRDLDELQRGLR</sequence>
<keyword id="KW-0963">Cytoplasm</keyword>
<keyword id="KW-1185">Reference proteome</keyword>
<keyword id="KW-0690">Ribosome biogenesis</keyword>
<keyword id="KW-0694">RNA-binding</keyword>
<keyword id="KW-0699">rRNA-binding</keyword>